<dbReference type="EMBL" id="CH445327">
    <property type="protein sequence ID" value="EAT90766.1"/>
    <property type="molecule type" value="Genomic_DNA"/>
</dbReference>
<dbReference type="RefSeq" id="XP_001793157.1">
    <property type="nucleotide sequence ID" value="XM_001793105.1"/>
</dbReference>
<dbReference type="SMR" id="Q0V0B0"/>
<dbReference type="FunCoup" id="Q0V0B0">
    <property type="interactions" value="40"/>
</dbReference>
<dbReference type="STRING" id="321614.Q0V0B0"/>
<dbReference type="EnsemblFungi" id="SNOT_02554">
    <property type="protein sequence ID" value="SNOT_02554"/>
    <property type="gene ID" value="SNOG_02554"/>
</dbReference>
<dbReference type="GeneID" id="5970007"/>
<dbReference type="KEGG" id="pno:SNOG_02554"/>
<dbReference type="VEuPathDB" id="FungiDB:JI435_025540"/>
<dbReference type="eggNOG" id="KOG1471">
    <property type="taxonomic scope" value="Eukaryota"/>
</dbReference>
<dbReference type="HOGENOM" id="CLU_045138_0_1_1"/>
<dbReference type="InParanoid" id="Q0V0B0"/>
<dbReference type="OMA" id="MVQIHDY"/>
<dbReference type="Proteomes" id="UP000001055">
    <property type="component" value="Unassembled WGS sequence"/>
</dbReference>
<dbReference type="GO" id="GO:0032541">
    <property type="term" value="C:cortical endoplasmic reticulum"/>
    <property type="evidence" value="ECO:0000318"/>
    <property type="project" value="GO_Central"/>
</dbReference>
<dbReference type="GO" id="GO:0005829">
    <property type="term" value="C:cytosol"/>
    <property type="evidence" value="ECO:0000318"/>
    <property type="project" value="GO_Central"/>
</dbReference>
<dbReference type="GO" id="GO:0005789">
    <property type="term" value="C:endoplasmic reticulum membrane"/>
    <property type="evidence" value="ECO:0007669"/>
    <property type="project" value="UniProtKB-SubCell"/>
</dbReference>
<dbReference type="GO" id="GO:0005886">
    <property type="term" value="C:plasma membrane"/>
    <property type="evidence" value="ECO:0000318"/>
    <property type="project" value="GO_Central"/>
</dbReference>
<dbReference type="GO" id="GO:0046872">
    <property type="term" value="F:metal ion binding"/>
    <property type="evidence" value="ECO:0007669"/>
    <property type="project" value="UniProtKB-KW"/>
</dbReference>
<dbReference type="GO" id="GO:0008526">
    <property type="term" value="F:phosphatidylinositol transfer activity"/>
    <property type="evidence" value="ECO:0000318"/>
    <property type="project" value="GO_Central"/>
</dbReference>
<dbReference type="GO" id="GO:0043001">
    <property type="term" value="P:Golgi to plasma membrane protein transport"/>
    <property type="evidence" value="ECO:0000318"/>
    <property type="project" value="GO_Central"/>
</dbReference>
<dbReference type="GO" id="GO:0017157">
    <property type="term" value="P:regulation of exocytosis"/>
    <property type="evidence" value="ECO:0000318"/>
    <property type="project" value="GO_Central"/>
</dbReference>
<dbReference type="CDD" id="cd00170">
    <property type="entry name" value="SEC14"/>
    <property type="match status" value="1"/>
</dbReference>
<dbReference type="FunFam" id="3.40.525.10:FF:000018">
    <property type="entry name" value="Phosphatidylinositol transfer protein SFH5"/>
    <property type="match status" value="1"/>
</dbReference>
<dbReference type="Gene3D" id="3.40.525.10">
    <property type="entry name" value="CRAL-TRIO lipid binding domain"/>
    <property type="match status" value="1"/>
</dbReference>
<dbReference type="InterPro" id="IPR001251">
    <property type="entry name" value="CRAL-TRIO_dom"/>
</dbReference>
<dbReference type="InterPro" id="IPR036865">
    <property type="entry name" value="CRAL-TRIO_dom_sf"/>
</dbReference>
<dbReference type="InterPro" id="IPR011074">
    <property type="entry name" value="CRAL/TRIO_N_dom"/>
</dbReference>
<dbReference type="InterPro" id="IPR036273">
    <property type="entry name" value="CRAL/TRIO_N_dom_sf"/>
</dbReference>
<dbReference type="InterPro" id="IPR042938">
    <property type="entry name" value="Sfh5"/>
</dbReference>
<dbReference type="PANTHER" id="PTHR47669">
    <property type="entry name" value="PHOSPHATIDYLINOSITOL TRANSFER PROTEIN SFH5"/>
    <property type="match status" value="1"/>
</dbReference>
<dbReference type="PANTHER" id="PTHR47669:SF1">
    <property type="entry name" value="PHOSPHATIDYLINOSITOL TRANSFER PROTEIN SFH5"/>
    <property type="match status" value="1"/>
</dbReference>
<dbReference type="Pfam" id="PF00650">
    <property type="entry name" value="CRAL_TRIO"/>
    <property type="match status" value="1"/>
</dbReference>
<dbReference type="Pfam" id="PF03765">
    <property type="entry name" value="CRAL_TRIO_N"/>
    <property type="match status" value="1"/>
</dbReference>
<dbReference type="SMART" id="SM00516">
    <property type="entry name" value="SEC14"/>
    <property type="match status" value="1"/>
</dbReference>
<dbReference type="SUPFAM" id="SSF52087">
    <property type="entry name" value="CRAL/TRIO domain"/>
    <property type="match status" value="1"/>
</dbReference>
<dbReference type="SUPFAM" id="SSF46938">
    <property type="entry name" value="CRAL/TRIO N-terminal domain"/>
    <property type="match status" value="1"/>
</dbReference>
<dbReference type="PROSITE" id="PS50191">
    <property type="entry name" value="CRAL_TRIO"/>
    <property type="match status" value="1"/>
</dbReference>
<keyword id="KW-0963">Cytoplasm</keyword>
<keyword id="KW-0256">Endoplasmic reticulum</keyword>
<keyword id="KW-0349">Heme</keyword>
<keyword id="KW-0408">Iron</keyword>
<keyword id="KW-0445">Lipid transport</keyword>
<keyword id="KW-0472">Membrane</keyword>
<keyword id="KW-0479">Metal-binding</keyword>
<keyword id="KW-0492">Microsome</keyword>
<keyword id="KW-0813">Transport</keyword>
<gene>
    <name type="primary">SFH5</name>
    <name type="ORF">SNOG_02554</name>
</gene>
<name>SFH5_PHANO</name>
<sequence>MPVVESDEKVDDTAKDLSSLGLSDKETARGEEKEEKGTVAAPSAPTVDTVQPTTGPSWPATAPDHPLSKFYDIFEDVIKSAEHNEVYGILLTKENPFQTKLILQKFLRANQNDLDKAKQQLLETLKWRKEFDPVKATGEKFDKTRFGGLGYVLEVQGVPESKNEKDVVTFNIYGAVKDKKATFGDLEGFLRWRVGLMEKSVQKLNLASATTPVPNYGEGPDPYQGFQIHDYLQVSFLRQDPAVKAATSKTIEVLGRYYPETLSRKFFVNVPVIMGWMYTAAKLIVAKETAKKFAVLSYGNQLAGELGVDIPAVYGGTKEDLESVAEGMSLE</sequence>
<comment type="function">
    <text evidence="2">Non-classical phosphatidylinositol (PtdIns) transfer protein (PITP), which exhibits PtdIns-binding/transfer activity in the absence of detectable PtdCho-binding/transfer activity. Regulates PtdIns(4,5)P2 homeostasis at the plasma membrane. Heme-binding protein that may play a role in organic oxidant-induced stress responses.</text>
</comment>
<comment type="catalytic activity">
    <reaction evidence="2">
        <text>a 1,2-diacyl-sn-glycero-3-phospho-(1D-myo-inositol)(in) = a 1,2-diacyl-sn-glycero-3-phospho-(1D-myo-inositol)(out)</text>
        <dbReference type="Rhea" id="RHEA:38691"/>
        <dbReference type="ChEBI" id="CHEBI:57880"/>
    </reaction>
    <physiologicalReaction direction="left-to-right" evidence="2">
        <dbReference type="Rhea" id="RHEA:38692"/>
    </physiologicalReaction>
</comment>
<comment type="cofactor">
    <cofactor evidence="1">
        <name>heme b</name>
        <dbReference type="ChEBI" id="CHEBI:60344"/>
    </cofactor>
</comment>
<comment type="subcellular location">
    <subcellularLocation>
        <location evidence="2">Cytoplasm</location>
    </subcellularLocation>
    <subcellularLocation>
        <location evidence="2">Endoplasmic reticulum membrane</location>
        <topology evidence="2">Peripheral membrane protein</topology>
    </subcellularLocation>
    <subcellularLocation>
        <location evidence="2">Microsome membrane</location>
        <topology evidence="2">Peripheral membrane protein</topology>
    </subcellularLocation>
</comment>
<comment type="similarity">
    <text evidence="5">Belongs to the SFH5 family.</text>
</comment>
<proteinExistence type="inferred from homology"/>
<organism>
    <name type="scientific">Phaeosphaeria nodorum (strain SN15 / ATCC MYA-4574 / FGSC 10173)</name>
    <name type="common">Glume blotch fungus</name>
    <name type="synonym">Parastagonospora nodorum</name>
    <dbReference type="NCBI Taxonomy" id="321614"/>
    <lineage>
        <taxon>Eukaryota</taxon>
        <taxon>Fungi</taxon>
        <taxon>Dikarya</taxon>
        <taxon>Ascomycota</taxon>
        <taxon>Pezizomycotina</taxon>
        <taxon>Dothideomycetes</taxon>
        <taxon>Pleosporomycetidae</taxon>
        <taxon>Pleosporales</taxon>
        <taxon>Pleosporineae</taxon>
        <taxon>Phaeosphaeriaceae</taxon>
        <taxon>Parastagonospora</taxon>
    </lineage>
</organism>
<accession>Q0V0B0</accession>
<protein>
    <recommendedName>
        <fullName>Phosphatidylinositol transfer protein SFH5</fullName>
        <shortName>PITP SFH5</shortName>
    </recommendedName>
</protein>
<feature type="chain" id="PRO_0000324985" description="Phosphatidylinositol transfer protein SFH5">
    <location>
        <begin position="1"/>
        <end position="331"/>
    </location>
</feature>
<feature type="domain" description="CRAL-TRIO" evidence="3">
    <location>
        <begin position="148"/>
        <end position="322"/>
    </location>
</feature>
<feature type="region of interest" description="Disordered" evidence="4">
    <location>
        <begin position="1"/>
        <end position="62"/>
    </location>
</feature>
<feature type="compositionally biased region" description="Basic and acidic residues" evidence="4">
    <location>
        <begin position="23"/>
        <end position="37"/>
    </location>
</feature>
<feature type="compositionally biased region" description="Polar residues" evidence="4">
    <location>
        <begin position="46"/>
        <end position="56"/>
    </location>
</feature>
<feature type="binding site" evidence="1">
    <location>
        <position position="173"/>
    </location>
    <ligand>
        <name>heme</name>
        <dbReference type="ChEBI" id="CHEBI:30413"/>
    </ligand>
</feature>
<feature type="binding site" evidence="1">
    <location>
        <position position="193"/>
    </location>
    <ligand>
        <name>heme</name>
        <dbReference type="ChEBI" id="CHEBI:30413"/>
    </ligand>
</feature>
<feature type="binding site" evidence="1">
    <location>
        <position position="229"/>
    </location>
    <ligand>
        <name>heme</name>
        <dbReference type="ChEBI" id="CHEBI:30413"/>
    </ligand>
</feature>
<feature type="binding site" description="proximal binding residue" evidence="1">
    <location>
        <position position="231"/>
    </location>
    <ligand>
        <name>heme</name>
        <dbReference type="ChEBI" id="CHEBI:30413"/>
    </ligand>
    <ligandPart>
        <name>Fe</name>
        <dbReference type="ChEBI" id="CHEBI:18248"/>
    </ligandPart>
</feature>
<feature type="binding site" evidence="1">
    <location>
        <position position="265"/>
    </location>
    <ligand>
        <name>heme</name>
        <dbReference type="ChEBI" id="CHEBI:30413"/>
    </ligand>
</feature>
<reference key="1">
    <citation type="journal article" date="2007" name="Plant Cell">
        <title>Dothideomycete-plant interactions illuminated by genome sequencing and EST analysis of the wheat pathogen Stagonospora nodorum.</title>
        <authorList>
            <person name="Hane J.K."/>
            <person name="Lowe R.G.T."/>
            <person name="Solomon P.S."/>
            <person name="Tan K.-C."/>
            <person name="Schoch C.L."/>
            <person name="Spatafora J.W."/>
            <person name="Crous P.W."/>
            <person name="Kodira C.D."/>
            <person name="Birren B.W."/>
            <person name="Galagan J.E."/>
            <person name="Torriani S.F.F."/>
            <person name="McDonald B.A."/>
            <person name="Oliver R.P."/>
        </authorList>
    </citation>
    <scope>NUCLEOTIDE SEQUENCE [LARGE SCALE GENOMIC DNA]</scope>
    <source>
        <strain>SN15 / ATCC MYA-4574 / FGSC 10173</strain>
    </source>
</reference>
<evidence type="ECO:0000250" key="1">
    <source>
        <dbReference type="UniProtKB" id="A6ZQI5"/>
    </source>
</evidence>
<evidence type="ECO:0000250" key="2">
    <source>
        <dbReference type="UniProtKB" id="P47008"/>
    </source>
</evidence>
<evidence type="ECO:0000255" key="3">
    <source>
        <dbReference type="PROSITE-ProRule" id="PRU00056"/>
    </source>
</evidence>
<evidence type="ECO:0000256" key="4">
    <source>
        <dbReference type="SAM" id="MobiDB-lite"/>
    </source>
</evidence>
<evidence type="ECO:0000305" key="5"/>